<accession>P9WJS7</accession>
<accession>L0T4E2</accession>
<accession>O53785</accession>
<accession>P65380</accession>
<protein>
    <recommendedName>
        <fullName evidence="7">Siderophore export accessory protein MmpS5</fullName>
    </recommendedName>
</protein>
<evidence type="ECO:0000255" key="1"/>
<evidence type="ECO:0000269" key="2">
    <source>
    </source>
</evidence>
<evidence type="ECO:0000269" key="3">
    <source>
    </source>
</evidence>
<evidence type="ECO:0000269" key="4">
    <source>
    </source>
</evidence>
<evidence type="ECO:0000269" key="5">
    <source>
    </source>
</evidence>
<evidence type="ECO:0000269" key="6">
    <source>
    </source>
</evidence>
<evidence type="ECO:0000305" key="7"/>
<gene>
    <name type="primary">mmpS5</name>
    <name type="ordered locus">Rv0677c</name>
    <name type="ORF">MTV040.05c</name>
</gene>
<proteinExistence type="evidence at protein level"/>
<name>MMPS5_MYCTU</name>
<organism>
    <name type="scientific">Mycobacterium tuberculosis (strain ATCC 25618 / H37Rv)</name>
    <dbReference type="NCBI Taxonomy" id="83332"/>
    <lineage>
        <taxon>Bacteria</taxon>
        <taxon>Bacillati</taxon>
        <taxon>Actinomycetota</taxon>
        <taxon>Actinomycetes</taxon>
        <taxon>Mycobacteriales</taxon>
        <taxon>Mycobacteriaceae</taxon>
        <taxon>Mycobacterium</taxon>
        <taxon>Mycobacterium tuberculosis complex</taxon>
    </lineage>
</organism>
<feature type="chain" id="PRO_0000216160" description="Siderophore export accessory protein MmpS5">
    <location>
        <begin position="1"/>
        <end position="142"/>
    </location>
</feature>
<feature type="transmembrane region" description="Helical" evidence="1">
    <location>
        <begin position="7"/>
        <end position="26"/>
    </location>
</feature>
<reference key="1">
    <citation type="journal article" date="1998" name="Nature">
        <title>Deciphering the biology of Mycobacterium tuberculosis from the complete genome sequence.</title>
        <authorList>
            <person name="Cole S.T."/>
            <person name="Brosch R."/>
            <person name="Parkhill J."/>
            <person name="Garnier T."/>
            <person name="Churcher C.M."/>
            <person name="Harris D.E."/>
            <person name="Gordon S.V."/>
            <person name="Eiglmeier K."/>
            <person name="Gas S."/>
            <person name="Barry C.E. III"/>
            <person name="Tekaia F."/>
            <person name="Badcock K."/>
            <person name="Basham D."/>
            <person name="Brown D."/>
            <person name="Chillingworth T."/>
            <person name="Connor R."/>
            <person name="Davies R.M."/>
            <person name="Devlin K."/>
            <person name="Feltwell T."/>
            <person name="Gentles S."/>
            <person name="Hamlin N."/>
            <person name="Holroyd S."/>
            <person name="Hornsby T."/>
            <person name="Jagels K."/>
            <person name="Krogh A."/>
            <person name="McLean J."/>
            <person name="Moule S."/>
            <person name="Murphy L.D."/>
            <person name="Oliver S."/>
            <person name="Osborne J."/>
            <person name="Quail M.A."/>
            <person name="Rajandream M.A."/>
            <person name="Rogers J."/>
            <person name="Rutter S."/>
            <person name="Seeger K."/>
            <person name="Skelton S."/>
            <person name="Squares S."/>
            <person name="Squares R."/>
            <person name="Sulston J.E."/>
            <person name="Taylor K."/>
            <person name="Whitehead S."/>
            <person name="Barrell B.G."/>
        </authorList>
    </citation>
    <scope>NUCLEOTIDE SEQUENCE [LARGE SCALE GENOMIC DNA]</scope>
    <source>
        <strain>ATCC 25618 / H37Rv</strain>
    </source>
</reference>
<reference key="2">
    <citation type="journal article" date="2002" name="Infect. Immun.">
        <title>IdeR, an essential gene in Mycobacterium tuberculosis: role of IdeR in iron-dependent gene expression, iron metabolism, and oxidative stress response.</title>
        <authorList>
            <person name="Rodriguez G.M."/>
            <person name="Voskuil M.I."/>
            <person name="Gold B."/>
            <person name="Schoolnik G.K."/>
            <person name="Smith I."/>
        </authorList>
    </citation>
    <scope>INDUCTION</scope>
    <source>
        <strain>H37Rv</strain>
    </source>
</reference>
<reference key="3">
    <citation type="journal article" date="2009" name="Tuberculosis">
        <title>Azole resistance in Mycobacterium tuberculosis is mediated by the MmpS5-MmpL5 efflux system.</title>
        <authorList>
            <person name="Milano A."/>
            <person name="Pasca M.R."/>
            <person name="Provvedi R."/>
            <person name="Lucarelli A.P."/>
            <person name="Manina G."/>
            <person name="Ribeiro A.L."/>
            <person name="Manganelli R."/>
            <person name="Riccardi G."/>
        </authorList>
    </citation>
    <scope>FUNCTION IN AZOLE RESISTANCE</scope>
    <source>
        <strain>H37Rv</strain>
    </source>
</reference>
<reference key="4">
    <citation type="journal article" date="2011" name="Mol. Cell. Proteomics">
        <title>Proteogenomic analysis of Mycobacterium tuberculosis by high resolution mass spectrometry.</title>
        <authorList>
            <person name="Kelkar D.S."/>
            <person name="Kumar D."/>
            <person name="Kumar P."/>
            <person name="Balakrishnan L."/>
            <person name="Muthusamy B."/>
            <person name="Yadav A.K."/>
            <person name="Shrivastava P."/>
            <person name="Marimuthu A."/>
            <person name="Anand S."/>
            <person name="Sundaram H."/>
            <person name="Kingsbury R."/>
            <person name="Harsha H.C."/>
            <person name="Nair B."/>
            <person name="Prasad T.S."/>
            <person name="Chauhan D.S."/>
            <person name="Katoch K."/>
            <person name="Katoch V.M."/>
            <person name="Kumar P."/>
            <person name="Chaerkady R."/>
            <person name="Ramachandran S."/>
            <person name="Dash D."/>
            <person name="Pandey A."/>
        </authorList>
    </citation>
    <scope>IDENTIFICATION BY MASS SPECTROMETRY [LARGE SCALE ANALYSIS]</scope>
    <source>
        <strain>ATCC 25618 / H37Rv</strain>
    </source>
</reference>
<reference key="5">
    <citation type="journal article" date="2013" name="PLoS Pathog.">
        <title>Discovery of a siderophore export system essential for virulence of Mycobacterium tuberculosis.</title>
        <authorList>
            <person name="Wells R.M."/>
            <person name="Jones C.M."/>
            <person name="Xi Z."/>
            <person name="Speer A."/>
            <person name="Danilchanka O."/>
            <person name="Doornbos K.S."/>
            <person name="Sun P."/>
            <person name="Wu F."/>
            <person name="Tian C."/>
            <person name="Niederweis M."/>
        </authorList>
    </citation>
    <scope>FUNCTION</scope>
    <scope>INTERACTION WITH MMPL5</scope>
    <scope>SUBCELLULAR LOCATION</scope>
    <scope>DISRUPTION PHENOTYPE</scope>
    <source>
        <strain>H37Rv</strain>
    </source>
</reference>
<reference key="6">
    <citation type="journal article" date="2014" name="J. Biol. Chem.">
        <title>Crystal structure of the transcriptional regulator Rv0678 of Mycobacterium tuberculosis.</title>
        <authorList>
            <person name="Radhakrishnan A."/>
            <person name="Kumar N."/>
            <person name="Wright C.C."/>
            <person name="Chou T.H."/>
            <person name="Tringides M.L."/>
            <person name="Bolla J.R."/>
            <person name="Lei H.T."/>
            <person name="Rajashankar K.R."/>
            <person name="Su C.C."/>
            <person name="Purdy G.E."/>
            <person name="Yu E.W."/>
        </authorList>
    </citation>
    <scope>INDUCTION</scope>
    <source>
        <strain>H37Rv</strain>
    </source>
</reference>
<reference key="7">
    <citation type="journal article" date="2014" name="PLoS ONE">
        <title>Acquired resistance of Mycobacterium tuberculosis to bedaquiline.</title>
        <authorList>
            <person name="Andries K."/>
            <person name="Villellas C."/>
            <person name="Coeck N."/>
            <person name="Thys K."/>
            <person name="Gevers T."/>
            <person name="Vranckx L."/>
            <person name="Lounis N."/>
            <person name="de Jong B.C."/>
            <person name="Koul A."/>
        </authorList>
    </citation>
    <scope>FUNCTION IN ANTIBIOTIC RESISTANCE</scope>
    <source>
        <strain>H37Rv</strain>
    </source>
</reference>
<comment type="function">
    <text evidence="4">Part of an export system, which is required for biosynthesis and secretion of siderophores. Essential for virulence.</text>
</comment>
<comment type="function">
    <text evidence="3 6">Overexpression of the system confers non-target based resistance to azoles, clofazimine and bedaquiline, via an efflux mechanism.</text>
</comment>
<comment type="subunit">
    <text evidence="4">Interacts with MmpL5.</text>
</comment>
<comment type="subcellular location">
    <subcellularLocation>
        <location evidence="4">Cell inner membrane</location>
        <topology evidence="1">Single-pass membrane protein</topology>
    </subcellularLocation>
</comment>
<comment type="induction">
    <text evidence="2 5">Repressed by MmpR5 (PubMed:24737322). Repressed by iron (PubMed:12065475). Regulation is IdeR-independent (PubMed:12065475).</text>
</comment>
<comment type="disruption phenotype">
    <text evidence="4">Deletion mutant does not exhibit a low iron growth phenotype, but has attenuated virulence compared to the wild-type strain. Deletion of both mmpS4 and mmpS5 drastically decreases synthesis and secretion of siderophores, and greatly reduces virulence in mice.</text>
</comment>
<comment type="similarity">
    <text evidence="7">Belongs to the MmpS family.</text>
</comment>
<dbReference type="EMBL" id="AL123456">
    <property type="protein sequence ID" value="CCP43420.1"/>
    <property type="molecule type" value="Genomic_DNA"/>
</dbReference>
<dbReference type="PIR" id="F70826">
    <property type="entry name" value="F70826"/>
</dbReference>
<dbReference type="RefSeq" id="NP_215191.1">
    <property type="nucleotide sequence ID" value="NC_000962.3"/>
</dbReference>
<dbReference type="RefSeq" id="WP_003403439.1">
    <property type="nucleotide sequence ID" value="NZ_NVQJ01000007.1"/>
</dbReference>
<dbReference type="SMR" id="P9WJS7"/>
<dbReference type="STRING" id="83332.Rv0677c"/>
<dbReference type="PaxDb" id="83332-Rv0677c"/>
<dbReference type="DNASU" id="888233"/>
<dbReference type="GeneID" id="45424639"/>
<dbReference type="GeneID" id="888233"/>
<dbReference type="KEGG" id="mtu:Rv0677c"/>
<dbReference type="KEGG" id="mtv:RVBD_0677c"/>
<dbReference type="TubercuList" id="Rv0677c"/>
<dbReference type="eggNOG" id="ENOG50329W4">
    <property type="taxonomic scope" value="Bacteria"/>
</dbReference>
<dbReference type="InParanoid" id="P9WJS7"/>
<dbReference type="OrthoDB" id="3398257at2"/>
<dbReference type="PhylomeDB" id="P9WJS7"/>
<dbReference type="Proteomes" id="UP000001584">
    <property type="component" value="Chromosome"/>
</dbReference>
<dbReference type="GO" id="GO:0005576">
    <property type="term" value="C:extracellular region"/>
    <property type="evidence" value="ECO:0007005"/>
    <property type="project" value="MTBBASE"/>
</dbReference>
<dbReference type="GO" id="GO:0005886">
    <property type="term" value="C:plasma membrane"/>
    <property type="evidence" value="ECO:0007669"/>
    <property type="project" value="UniProtKB-SubCell"/>
</dbReference>
<dbReference type="Gene3D" id="2.60.40.2880">
    <property type="entry name" value="MmpS1-5, C-terminal soluble domain"/>
    <property type="match status" value="1"/>
</dbReference>
<dbReference type="InterPro" id="IPR008693">
    <property type="entry name" value="MmpS"/>
</dbReference>
<dbReference type="InterPro" id="IPR038468">
    <property type="entry name" value="MmpS_C"/>
</dbReference>
<dbReference type="Pfam" id="PF05423">
    <property type="entry name" value="Mycobact_memb"/>
    <property type="match status" value="1"/>
</dbReference>
<sequence>MIGTLKRAWIPLLILVVVAIAGFTVQRIRTFFGSEGILVTPKVFADDPEPFDPKVVEYEVSGSGSYVNINYLDLDAKPQRIDGAALPWSLTLKTTAPSAAPNILAQGDGTSITCRITVDGEVKDERTATGVDALTYCFVKSA</sequence>
<keyword id="KW-0997">Cell inner membrane</keyword>
<keyword id="KW-1003">Cell membrane</keyword>
<keyword id="KW-0472">Membrane</keyword>
<keyword id="KW-1185">Reference proteome</keyword>
<keyword id="KW-0812">Transmembrane</keyword>
<keyword id="KW-1133">Transmembrane helix</keyword>
<keyword id="KW-0843">Virulence</keyword>